<keyword id="KW-0067">ATP-binding</keyword>
<keyword id="KW-0963">Cytoplasm</keyword>
<keyword id="KW-0418">Kinase</keyword>
<keyword id="KW-0547">Nucleotide-binding</keyword>
<keyword id="KW-0597">Phosphoprotein</keyword>
<keyword id="KW-1185">Reference proteome</keyword>
<keyword id="KW-0808">Transferase</keyword>
<sequence>MDTSHEIHDKIPDTLREQQQHLRQKESEGCITTLKDLNVPETKKLSSVLHGRKASTYLRIFRDDECLADNNNGVDSNNGGSVTCADKITRSEATPKSVPEGLQVSEKKNNPDTLSSSLSSFILSNHEEPAIKPNKHVAHRNNITETGQGSGEDIAKQQSHQPQVLHHQTSLKPIQNVDEGCISPKSTYQESLHGISEDLTLKPVSSATYYPHKSKADSGYEEKDKMENDIDTIQPATINCASGIATLPSSYNRHTFKVKTYSTLSQSLRQENVNNRSNEKKPQQFVPHSESIKEKPNTFEQDKEGEQADEEEDEGDNEHREYPLAVELKPFTNRVGGHTAIFRFSKRAVCKALVNRENRWYENIELCHKELLQFMPRYIGVLNVRQHFQSKDDFLSDLDQENNGKNDTSNENKDIEVNHNNNDDIALNTEPTGTPLTHIHSFPLEHSSRQVLEKEHPEIESVHPHVKRSLSSSNQPSLLPEVVLNDNRHIIPESLWYKYSDSPNSAPNDSYFSSSSSHNSCSFGERGNTNKLKRRDSGSTMINTELKNLVIREVFAPKCFRRKRNSNTTTMGNHNARLGSSPSFLTQKSRASSHDASNTSMKTLGDSSSQASLQMDDSKVNPNLQDPFLKKSLHEKISNALDGSHSVMDLKQFHKNEQIKHKNSFCNSLSPILTATNSRDDGEFATSPNYISNAQDGVFDMDEDTGNETINMDNHGCHLDSGKNMIIKSLAYNVSNDYSHHDIESITFEETSHTIVSKFILLEDLTRNMNKPCALDLKMGTRQYGVDAKRAKQLSQRAKCLKTTSRRLGVRICGLKVWNKDYYITRDKYFGRRVKVGWQFARVLARFLYDGKTIESLIRQIPRLIKQLDTLYSEIFNLKGYRLYGASLLLMYDGDANKSNSKRKKAANVKVNLIDFARCVTKEDAMECMDKFRIPPKSPNIEDKGFLRGVKSLRFYLLLIWNYLTSDMPLIFDEVEMNDMISEEADSNSFTSATGSKINFNSKWDWLDEFDKEDEEMYNDPNSKLRQKWRKYELIFDAEPRYNDDAQVSD</sequence>
<dbReference type="EC" id="2.7.4.21"/>
<dbReference type="EMBL" id="S81651">
    <property type="protein sequence ID" value="AAB36234.1"/>
    <property type="molecule type" value="Genomic_DNA"/>
</dbReference>
<dbReference type="EMBL" id="X95966">
    <property type="protein sequence ID" value="CAA65208.1"/>
    <property type="molecule type" value="Genomic_DNA"/>
</dbReference>
<dbReference type="EMBL" id="Z49770">
    <property type="protein sequence ID" value="CAA89842.1"/>
    <property type="molecule type" value="Genomic_DNA"/>
</dbReference>
<dbReference type="EMBL" id="Z74313">
    <property type="protein sequence ID" value="CAA98837.1"/>
    <property type="molecule type" value="Genomic_DNA"/>
</dbReference>
<dbReference type="EMBL" id="Z74314">
    <property type="protein sequence ID" value="CAA98839.1"/>
    <property type="molecule type" value="Genomic_DNA"/>
</dbReference>
<dbReference type="EMBL" id="BK006938">
    <property type="protein sequence ID" value="DAA11863.1"/>
    <property type="molecule type" value="Genomic_DNA"/>
</dbReference>
<dbReference type="PIR" id="S54640">
    <property type="entry name" value="S54640"/>
</dbReference>
<dbReference type="RefSeq" id="NP_010300.3">
    <property type="nucleotide sequence ID" value="NM_001180325.3"/>
</dbReference>
<dbReference type="SMR" id="Q12494"/>
<dbReference type="BioGRID" id="32067">
    <property type="interactions" value="299"/>
</dbReference>
<dbReference type="DIP" id="DIP-1402N"/>
<dbReference type="FunCoup" id="Q12494">
    <property type="interactions" value="245"/>
</dbReference>
<dbReference type="IntAct" id="Q12494">
    <property type="interactions" value="8"/>
</dbReference>
<dbReference type="MINT" id="Q12494"/>
<dbReference type="STRING" id="4932.YDR017C"/>
<dbReference type="GlyGen" id="Q12494">
    <property type="glycosylation" value="1 site, 1 O-linked glycan (1 site)"/>
</dbReference>
<dbReference type="iPTMnet" id="Q12494"/>
<dbReference type="PaxDb" id="4932-YDR017C"/>
<dbReference type="PeptideAtlas" id="Q12494"/>
<dbReference type="EnsemblFungi" id="YDR017C_mRNA">
    <property type="protein sequence ID" value="YDR017C"/>
    <property type="gene ID" value="YDR017C"/>
</dbReference>
<dbReference type="GeneID" id="851580"/>
<dbReference type="KEGG" id="sce:YDR017C"/>
<dbReference type="AGR" id="SGD:S000002424"/>
<dbReference type="SGD" id="S000002424">
    <property type="gene designation" value="KCS1"/>
</dbReference>
<dbReference type="VEuPathDB" id="FungiDB:YDR017C"/>
<dbReference type="eggNOG" id="KOG1620">
    <property type="taxonomic scope" value="Eukaryota"/>
</dbReference>
<dbReference type="HOGENOM" id="CLU_004422_0_0_1"/>
<dbReference type="InParanoid" id="Q12494"/>
<dbReference type="OMA" id="KEDAMEC"/>
<dbReference type="OrthoDB" id="2573163at2759"/>
<dbReference type="BioCyc" id="YEAST:G3O-29635-MONOMER"/>
<dbReference type="BRENDA" id="2.7.4.21">
    <property type="organism ID" value="984"/>
</dbReference>
<dbReference type="Reactome" id="R-SCE-1855167">
    <property type="pathway name" value="Synthesis of pyrophosphates in the cytosol"/>
</dbReference>
<dbReference type="Reactome" id="R-SCE-1855191">
    <property type="pathway name" value="Synthesis of IPs in the nucleus"/>
</dbReference>
<dbReference type="SABIO-RK" id="Q12494"/>
<dbReference type="BioGRID-ORCS" id="851580">
    <property type="hits" value="0 hits in 10 CRISPR screens"/>
</dbReference>
<dbReference type="PRO" id="PR:Q12494"/>
<dbReference type="Proteomes" id="UP000002311">
    <property type="component" value="Chromosome IV"/>
</dbReference>
<dbReference type="RNAct" id="Q12494">
    <property type="molecule type" value="protein"/>
</dbReference>
<dbReference type="GO" id="GO:0005737">
    <property type="term" value="C:cytoplasm"/>
    <property type="evidence" value="ECO:0007005"/>
    <property type="project" value="SGD"/>
</dbReference>
<dbReference type="GO" id="GO:0005634">
    <property type="term" value="C:nucleus"/>
    <property type="evidence" value="ECO:0000318"/>
    <property type="project" value="GO_Central"/>
</dbReference>
<dbReference type="GO" id="GO:0005524">
    <property type="term" value="F:ATP binding"/>
    <property type="evidence" value="ECO:0007669"/>
    <property type="project" value="UniProtKB-KW"/>
</dbReference>
<dbReference type="GO" id="GO:0000829">
    <property type="term" value="F:diphosphoinositol pentakisphosphate kinase activity"/>
    <property type="evidence" value="ECO:0000314"/>
    <property type="project" value="SGD"/>
</dbReference>
<dbReference type="GO" id="GO:0000832">
    <property type="term" value="F:inositol hexakisphosphate 5-kinase activity"/>
    <property type="evidence" value="ECO:0007669"/>
    <property type="project" value="RHEA"/>
</dbReference>
<dbReference type="GO" id="GO:0000828">
    <property type="term" value="F:inositol hexakisphosphate kinase activity"/>
    <property type="evidence" value="ECO:0000314"/>
    <property type="project" value="SGD"/>
</dbReference>
<dbReference type="GO" id="GO:0000827">
    <property type="term" value="F:inositol-1,3,4,5,6-pentakisphosphate kinase activity"/>
    <property type="evidence" value="ECO:0000314"/>
    <property type="project" value="SGD"/>
</dbReference>
<dbReference type="GO" id="GO:0000824">
    <property type="term" value="F:inositol-1,4,5,6-tetrakisphosphate 3-kinase activity"/>
    <property type="evidence" value="ECO:0000318"/>
    <property type="project" value="GO_Central"/>
</dbReference>
<dbReference type="GO" id="GO:0008440">
    <property type="term" value="F:inositol-1,4,5-trisphosphate 3-kinase activity"/>
    <property type="evidence" value="ECO:0000318"/>
    <property type="project" value="GO_Central"/>
</dbReference>
<dbReference type="GO" id="GO:0032958">
    <property type="term" value="P:inositol phosphate biosynthetic process"/>
    <property type="evidence" value="ECO:0000314"/>
    <property type="project" value="SGD"/>
</dbReference>
<dbReference type="GO" id="GO:0046854">
    <property type="term" value="P:phosphatidylinositol phosphate biosynthetic process"/>
    <property type="evidence" value="ECO:0000318"/>
    <property type="project" value="GO_Central"/>
</dbReference>
<dbReference type="GO" id="GO:0010919">
    <property type="term" value="P:regulation of inositol phosphate biosynthetic process"/>
    <property type="evidence" value="ECO:0000315"/>
    <property type="project" value="SGD"/>
</dbReference>
<dbReference type="Gene3D" id="3.30.470.160">
    <property type="entry name" value="Inositol polyphosphate kinase"/>
    <property type="match status" value="1"/>
</dbReference>
<dbReference type="InterPro" id="IPR005522">
    <property type="entry name" value="IPK"/>
</dbReference>
<dbReference type="InterPro" id="IPR038286">
    <property type="entry name" value="IPK_sf"/>
</dbReference>
<dbReference type="PANTHER" id="PTHR12400">
    <property type="entry name" value="INOSITOL POLYPHOSPHATE KINASE"/>
    <property type="match status" value="1"/>
</dbReference>
<dbReference type="PANTHER" id="PTHR12400:SF21">
    <property type="entry name" value="KINASE"/>
    <property type="match status" value="1"/>
</dbReference>
<dbReference type="Pfam" id="PF03770">
    <property type="entry name" value="IPK"/>
    <property type="match status" value="1"/>
</dbReference>
<dbReference type="SUPFAM" id="SSF56104">
    <property type="entry name" value="SAICAR synthase-like"/>
    <property type="match status" value="1"/>
</dbReference>
<feature type="chain" id="PRO_0000255955" description="Inositol hexakisphosphate kinase 1">
    <location>
        <begin position="1"/>
        <end position="1050"/>
    </location>
</feature>
<feature type="region of interest" description="Disordered" evidence="2">
    <location>
        <begin position="87"/>
        <end position="117"/>
    </location>
</feature>
<feature type="region of interest" description="Disordered" evidence="2">
    <location>
        <begin position="129"/>
        <end position="177"/>
    </location>
</feature>
<feature type="region of interest" description="Disordered" evidence="2">
    <location>
        <begin position="269"/>
        <end position="319"/>
    </location>
</feature>
<feature type="region of interest" description="Disordered" evidence="2">
    <location>
        <begin position="396"/>
        <end position="423"/>
    </location>
</feature>
<feature type="region of interest" description="Disordered" evidence="2">
    <location>
        <begin position="508"/>
        <end position="539"/>
    </location>
</feature>
<feature type="region of interest" description="Disordered" evidence="2">
    <location>
        <begin position="562"/>
        <end position="625"/>
    </location>
</feature>
<feature type="compositionally biased region" description="Polar residues" evidence="2">
    <location>
        <begin position="156"/>
        <end position="173"/>
    </location>
</feature>
<feature type="compositionally biased region" description="Basic and acidic residues" evidence="2">
    <location>
        <begin position="290"/>
        <end position="306"/>
    </location>
</feature>
<feature type="compositionally biased region" description="Acidic residues" evidence="2">
    <location>
        <begin position="307"/>
        <end position="316"/>
    </location>
</feature>
<feature type="compositionally biased region" description="Basic and acidic residues" evidence="2">
    <location>
        <begin position="402"/>
        <end position="417"/>
    </location>
</feature>
<feature type="compositionally biased region" description="Low complexity" evidence="2">
    <location>
        <begin position="508"/>
        <end position="522"/>
    </location>
</feature>
<feature type="compositionally biased region" description="Polar residues" evidence="2">
    <location>
        <begin position="566"/>
        <end position="624"/>
    </location>
</feature>
<feature type="binding site" evidence="1">
    <location>
        <begin position="772"/>
        <end position="780"/>
    </location>
    <ligand>
        <name>substrate</name>
    </ligand>
</feature>
<feature type="modified residue" description="Phosphoserine" evidence="16 17">
    <location>
        <position position="150"/>
    </location>
</feature>
<feature type="modified residue" description="Phosphoserine" evidence="16 17">
    <location>
        <position position="396"/>
    </location>
</feature>
<feature type="modified residue" description="Phosphoserine" evidence="17">
    <location>
        <position position="469"/>
    </location>
</feature>
<feature type="modified residue" description="Phosphoserine" evidence="14 15 17">
    <location>
        <position position="537"/>
    </location>
</feature>
<feature type="modified residue" description="Phosphoserine" evidence="17">
    <location>
        <position position="539"/>
    </location>
</feature>
<feature type="modified residue" description="Phosphoserine" evidence="14">
    <location>
        <position position="566"/>
    </location>
</feature>
<feature type="modified residue" description="Phosphoserine" evidence="16">
    <location>
        <position position="583"/>
    </location>
</feature>
<feature type="modified residue" description="Phosphoserine" evidence="14">
    <location>
        <position position="589"/>
    </location>
</feature>
<feature type="modified residue" description="Phosphoserine" evidence="17">
    <location>
        <position position="646"/>
    </location>
</feature>
<feature type="modified residue" description="Phosphoserine" evidence="17">
    <location>
        <position position="664"/>
    </location>
</feature>
<feature type="modified residue" description="Phosphoserine" evidence="16 17">
    <location>
        <position position="670"/>
    </location>
</feature>
<proteinExistence type="evidence at protein level"/>
<evidence type="ECO:0000250" key="1"/>
<evidence type="ECO:0000256" key="2">
    <source>
        <dbReference type="SAM" id="MobiDB-lite"/>
    </source>
</evidence>
<evidence type="ECO:0000269" key="3">
    <source>
    </source>
</evidence>
<evidence type="ECO:0000269" key="4">
    <source>
    </source>
</evidence>
<evidence type="ECO:0000269" key="5">
    <source>
    </source>
</evidence>
<evidence type="ECO:0000269" key="6">
    <source>
    </source>
</evidence>
<evidence type="ECO:0000269" key="7">
    <source>
    </source>
</evidence>
<evidence type="ECO:0000269" key="8">
    <source>
    </source>
</evidence>
<evidence type="ECO:0000269" key="9">
    <source>
    </source>
</evidence>
<evidence type="ECO:0000269" key="10">
    <source>
    </source>
</evidence>
<evidence type="ECO:0000269" key="11">
    <source>
    </source>
</evidence>
<evidence type="ECO:0000269" key="12">
    <source>
    </source>
</evidence>
<evidence type="ECO:0000305" key="13"/>
<evidence type="ECO:0007744" key="14">
    <source>
    </source>
</evidence>
<evidence type="ECO:0007744" key="15">
    <source>
    </source>
</evidence>
<evidence type="ECO:0007744" key="16">
    <source>
    </source>
</evidence>
<evidence type="ECO:0007744" key="17">
    <source>
    </source>
</evidence>
<accession>Q12494</accession>
<accession>D6VS03</accession>
<accession>P89899</accession>
<accession>Q7LGR2</accession>
<gene>
    <name type="primary">KCS1</name>
    <name type="ordered locus">YDR017C</name>
    <name type="ORF">PZF1050</name>
</gene>
<organism>
    <name type="scientific">Saccharomyces cerevisiae (strain ATCC 204508 / S288c)</name>
    <name type="common">Baker's yeast</name>
    <dbReference type="NCBI Taxonomy" id="559292"/>
    <lineage>
        <taxon>Eukaryota</taxon>
        <taxon>Fungi</taxon>
        <taxon>Dikarya</taxon>
        <taxon>Ascomycota</taxon>
        <taxon>Saccharomycotina</taxon>
        <taxon>Saccharomycetes</taxon>
        <taxon>Saccharomycetales</taxon>
        <taxon>Saccharomycetaceae</taxon>
        <taxon>Saccharomyces</taxon>
    </lineage>
</organism>
<reference key="1">
    <citation type="journal article" date="1995" name="Genetics">
        <title>Suppressors of a Saccharomyces cerevisiae pkc1 mutation identify alleles of the phosphatase gene PTC1 and of a novel gene encoding a putative basic leucine zipper protein.</title>
        <authorList>
            <person name="Huang K.N."/>
            <person name="Symington L.S."/>
        </authorList>
    </citation>
    <scope>NUCLEOTIDE SEQUENCE [GENOMIC DNA]</scope>
    <scope>FUNCTION</scope>
</reference>
<reference key="2">
    <citation type="journal article" date="1996" name="Yeast">
        <title>Sequencing and analysis of a 35.4 kb region on the right arm of chromosome IV from Saccharomyces cerevisiae reveal 23 open reading frames.</title>
        <authorList>
            <person name="Eide L.G."/>
            <person name="Sander C."/>
            <person name="Prydz H."/>
        </authorList>
    </citation>
    <scope>NUCLEOTIDE SEQUENCE [GENOMIC DNA]</scope>
    <source>
        <strain>ATCC 204508 / S288c</strain>
    </source>
</reference>
<reference key="3">
    <citation type="journal article" date="1997" name="Nature">
        <title>The nucleotide sequence of Saccharomyces cerevisiae chromosome IV.</title>
        <authorList>
            <person name="Jacq C."/>
            <person name="Alt-Moerbe J."/>
            <person name="Andre B."/>
            <person name="Arnold W."/>
            <person name="Bahr A."/>
            <person name="Ballesta J.P.G."/>
            <person name="Bargues M."/>
            <person name="Baron L."/>
            <person name="Becker A."/>
            <person name="Biteau N."/>
            <person name="Bloecker H."/>
            <person name="Blugeon C."/>
            <person name="Boskovic J."/>
            <person name="Brandt P."/>
            <person name="Brueckner M."/>
            <person name="Buitrago M.J."/>
            <person name="Coster F."/>
            <person name="Delaveau T."/>
            <person name="del Rey F."/>
            <person name="Dujon B."/>
            <person name="Eide L.G."/>
            <person name="Garcia-Cantalejo J.M."/>
            <person name="Goffeau A."/>
            <person name="Gomez-Peris A."/>
            <person name="Granotier C."/>
            <person name="Hanemann V."/>
            <person name="Hankeln T."/>
            <person name="Hoheisel J.D."/>
            <person name="Jaeger W."/>
            <person name="Jimenez A."/>
            <person name="Jonniaux J.-L."/>
            <person name="Kraemer C."/>
            <person name="Kuester H."/>
            <person name="Laamanen P."/>
            <person name="Legros Y."/>
            <person name="Louis E.J."/>
            <person name="Moeller-Rieker S."/>
            <person name="Monnet A."/>
            <person name="Moro M."/>
            <person name="Mueller-Auer S."/>
            <person name="Nussbaumer B."/>
            <person name="Paricio N."/>
            <person name="Paulin L."/>
            <person name="Perea J."/>
            <person name="Perez-Alonso M."/>
            <person name="Perez-Ortin J.E."/>
            <person name="Pohl T.M."/>
            <person name="Prydz H."/>
            <person name="Purnelle B."/>
            <person name="Rasmussen S.W."/>
            <person name="Remacha M.A."/>
            <person name="Revuelta J.L."/>
            <person name="Rieger M."/>
            <person name="Salom D."/>
            <person name="Saluz H.P."/>
            <person name="Saiz J.E."/>
            <person name="Saren A.-M."/>
            <person name="Schaefer M."/>
            <person name="Scharfe M."/>
            <person name="Schmidt E.R."/>
            <person name="Schneider C."/>
            <person name="Scholler P."/>
            <person name="Schwarz S."/>
            <person name="Soler-Mira A."/>
            <person name="Urrestarazu L.A."/>
            <person name="Verhasselt P."/>
            <person name="Vissers S."/>
            <person name="Voet M."/>
            <person name="Volckaert G."/>
            <person name="Wagner G."/>
            <person name="Wambutt R."/>
            <person name="Wedler E."/>
            <person name="Wedler H."/>
            <person name="Woelfl S."/>
            <person name="Harris D.E."/>
            <person name="Bowman S."/>
            <person name="Brown D."/>
            <person name="Churcher C.M."/>
            <person name="Connor R."/>
            <person name="Dedman K."/>
            <person name="Gentles S."/>
            <person name="Hamlin N."/>
            <person name="Hunt S."/>
            <person name="Jones L."/>
            <person name="McDonald S."/>
            <person name="Murphy L.D."/>
            <person name="Niblett D."/>
            <person name="Odell C."/>
            <person name="Oliver K."/>
            <person name="Rajandream M.A."/>
            <person name="Richards C."/>
            <person name="Shore L."/>
            <person name="Walsh S.V."/>
            <person name="Barrell B.G."/>
            <person name="Dietrich F.S."/>
            <person name="Mulligan J.T."/>
            <person name="Allen E."/>
            <person name="Araujo R."/>
            <person name="Aviles E."/>
            <person name="Berno A."/>
            <person name="Carpenter J."/>
            <person name="Chen E."/>
            <person name="Cherry J.M."/>
            <person name="Chung E."/>
            <person name="Duncan M."/>
            <person name="Hunicke-Smith S."/>
            <person name="Hyman R.W."/>
            <person name="Komp C."/>
            <person name="Lashkari D."/>
            <person name="Lew H."/>
            <person name="Lin D."/>
            <person name="Mosedale D."/>
            <person name="Nakahara K."/>
            <person name="Namath A."/>
            <person name="Oefner P."/>
            <person name="Oh C."/>
            <person name="Petel F.X."/>
            <person name="Roberts D."/>
            <person name="Schramm S."/>
            <person name="Schroeder M."/>
            <person name="Shogren T."/>
            <person name="Shroff N."/>
            <person name="Winant A."/>
            <person name="Yelton M.A."/>
            <person name="Botstein D."/>
            <person name="Davis R.W."/>
            <person name="Johnston M."/>
            <person name="Andrews S."/>
            <person name="Brinkman R."/>
            <person name="Cooper J."/>
            <person name="Ding H."/>
            <person name="Du Z."/>
            <person name="Favello A."/>
            <person name="Fulton L."/>
            <person name="Gattung S."/>
            <person name="Greco T."/>
            <person name="Hallsworth K."/>
            <person name="Hawkins J."/>
            <person name="Hillier L.W."/>
            <person name="Jier M."/>
            <person name="Johnson D."/>
            <person name="Johnston L."/>
            <person name="Kirsten J."/>
            <person name="Kucaba T."/>
            <person name="Langston Y."/>
            <person name="Latreille P."/>
            <person name="Le T."/>
            <person name="Mardis E."/>
            <person name="Menezes S."/>
            <person name="Miller N."/>
            <person name="Nhan M."/>
            <person name="Pauley A."/>
            <person name="Peluso D."/>
            <person name="Rifkin L."/>
            <person name="Riles L."/>
            <person name="Taich A."/>
            <person name="Trevaskis E."/>
            <person name="Vignati D."/>
            <person name="Wilcox L."/>
            <person name="Wohldman P."/>
            <person name="Vaudin M."/>
            <person name="Wilson R."/>
            <person name="Waterston R."/>
            <person name="Albermann K."/>
            <person name="Hani J."/>
            <person name="Heumann K."/>
            <person name="Kleine K."/>
            <person name="Mewes H.-W."/>
            <person name="Zollner A."/>
            <person name="Zaccaria P."/>
        </authorList>
    </citation>
    <scope>NUCLEOTIDE SEQUENCE [LARGE SCALE GENOMIC DNA]</scope>
    <source>
        <strain>ATCC 204508 / S288c</strain>
    </source>
</reference>
<reference key="4">
    <citation type="journal article" date="2014" name="G3 (Bethesda)">
        <title>The reference genome sequence of Saccharomyces cerevisiae: Then and now.</title>
        <authorList>
            <person name="Engel S.R."/>
            <person name="Dietrich F.S."/>
            <person name="Fisk D.G."/>
            <person name="Binkley G."/>
            <person name="Balakrishnan R."/>
            <person name="Costanzo M.C."/>
            <person name="Dwight S.S."/>
            <person name="Hitz B.C."/>
            <person name="Karra K."/>
            <person name="Nash R.S."/>
            <person name="Weng S."/>
            <person name="Wong E.D."/>
            <person name="Lloyd P."/>
            <person name="Skrzypek M.S."/>
            <person name="Miyasato S.R."/>
            <person name="Simison M."/>
            <person name="Cherry J.M."/>
        </authorList>
    </citation>
    <scope>GENOME REANNOTATION</scope>
    <source>
        <strain>ATCC 204508 / S288c</strain>
    </source>
</reference>
<reference key="5">
    <citation type="journal article" date="1999" name="Curr. Biol.">
        <title>Synthesis of diphosphoinositol pentakisphosphate by a newly identified family of higher inositol polyphosphate kinases.</title>
        <authorList>
            <person name="Saiardi A."/>
            <person name="Erdjument-Bromage H."/>
            <person name="Snowman A.M."/>
            <person name="Tempst P."/>
            <person name="Snyder S.H."/>
        </authorList>
    </citation>
    <scope>FUNCTION</scope>
</reference>
<reference key="6">
    <citation type="journal article" date="2000" name="J. Biol. Chem.">
        <title>The inositol hexakisphosphate kinase family. Catalytic flexibility and function in yeast vacuole biogenesis.</title>
        <authorList>
            <person name="Saiardi A."/>
            <person name="Caffrey J.J."/>
            <person name="Snyder S.H."/>
            <person name="Shears S.B."/>
        </authorList>
    </citation>
    <scope>FUNCTION</scope>
    <scope>BIOPHYSICOCHEMICAL PROPERTIES</scope>
</reference>
<reference key="7">
    <citation type="journal article" date="2002" name="J. Biol. Chem.">
        <title>In Saccharomyces cerevisiae, the inositol polyphosphate kinase activity of Kcs1p is required for resistance to salt stress, cell wall integrity, and vacuolar morphogenesis.</title>
        <authorList>
            <person name="Dubois E."/>
            <person name="Scherens B."/>
            <person name="Vierendeels F."/>
            <person name="Ho M.M.W."/>
            <person name="Messenguy F."/>
            <person name="Shears S.B."/>
        </authorList>
    </citation>
    <scope>FUNCTION</scope>
</reference>
<reference key="8">
    <citation type="journal article" date="2003" name="Nature">
        <title>Global analysis of protein localization in budding yeast.</title>
        <authorList>
            <person name="Huh W.-K."/>
            <person name="Falvo J.V."/>
            <person name="Gerke L.C."/>
            <person name="Carroll A.S."/>
            <person name="Howson R.W."/>
            <person name="Weissman J.S."/>
            <person name="O'Shea E.K."/>
        </authorList>
    </citation>
    <scope>SUBCELLULAR LOCATION [LARGE SCALE ANALYSIS]</scope>
</reference>
<reference key="9">
    <citation type="journal article" date="2003" name="Nature">
        <title>Global analysis of protein expression in yeast.</title>
        <authorList>
            <person name="Ghaemmaghami S."/>
            <person name="Huh W.-K."/>
            <person name="Bower K."/>
            <person name="Howson R.W."/>
            <person name="Belle A."/>
            <person name="Dephoure N."/>
            <person name="O'Shea E.K."/>
            <person name="Weissman J.S."/>
        </authorList>
    </citation>
    <scope>LEVEL OF PROTEIN EXPRESSION [LARGE SCALE ANALYSIS]</scope>
</reference>
<reference key="10">
    <citation type="journal article" date="2005" name="J. Biol. Chem.">
        <title>Inositol diphosphate signaling regulates telomere length.</title>
        <authorList>
            <person name="York S.J."/>
            <person name="Armbruster B.N."/>
            <person name="Greenwell P."/>
            <person name="Petes T.D."/>
            <person name="York J.D."/>
        </authorList>
    </citation>
    <scope>FUNCTION</scope>
</reference>
<reference key="11">
    <citation type="journal article" date="2005" name="J. Biol. Chem.">
        <title>Plc1p, Arg82p, and Kcs1p, enzymes involved in inositol pyrophosphate synthesis, are essential for phosphate regulation and polyphosphate accumulation in Saccharomyces cerevisiae.</title>
        <authorList>
            <person name="Auesukaree C."/>
            <person name="Tochio H."/>
            <person name="Shirakawa M."/>
            <person name="Kaneko Y."/>
            <person name="Harashima S."/>
        </authorList>
    </citation>
    <scope>FUNCTION</scope>
</reference>
<reference key="12">
    <citation type="journal article" date="2005" name="J. Biol. Chem.">
        <title>Molecular definition of a novel inositol polyphosphate metabolic pathway initiated by inositol 1,4,5-trisphosphate 3-kinase activity in Saccharomyces cerevisiae.</title>
        <authorList>
            <person name="Seeds A.M."/>
            <person name="Bastidas R.J."/>
            <person name="York J.D."/>
        </authorList>
    </citation>
    <scope>FUNCTION</scope>
</reference>
<reference key="13">
    <citation type="journal article" date="2005" name="Mol. Cell. Proteomics">
        <title>Quantitative phosphoproteomics applied to the yeast pheromone signaling pathway.</title>
        <authorList>
            <person name="Gruhler A."/>
            <person name="Olsen J.V."/>
            <person name="Mohammed S."/>
            <person name="Mortensen P."/>
            <person name="Faergeman N.J."/>
            <person name="Mann M."/>
            <person name="Jensen O.N."/>
        </authorList>
    </citation>
    <scope>IDENTIFICATION BY MASS SPECTROMETRY [LARGE SCALE ANALYSIS]</scope>
    <source>
        <strain>YAL6B</strain>
    </source>
</reference>
<reference key="14">
    <citation type="journal article" date="2007" name="J. Proteome Res.">
        <title>Large-scale phosphorylation analysis of alpha-factor-arrested Saccharomyces cerevisiae.</title>
        <authorList>
            <person name="Li X."/>
            <person name="Gerber S.A."/>
            <person name="Rudner A.D."/>
            <person name="Beausoleil S.A."/>
            <person name="Haas W."/>
            <person name="Villen J."/>
            <person name="Elias J.E."/>
            <person name="Gygi S.P."/>
        </authorList>
    </citation>
    <scope>PHOSPHORYLATION [LARGE SCALE ANALYSIS] AT SER-537</scope>
    <scope>IDENTIFICATION BY MASS SPECTROMETRY [LARGE SCALE ANALYSIS]</scope>
    <source>
        <strain>ADR376</strain>
    </source>
</reference>
<reference key="15">
    <citation type="journal article" date="2007" name="Proc. Natl. Acad. Sci. U.S.A.">
        <title>Analysis of phosphorylation sites on proteins from Saccharomyces cerevisiae by electron transfer dissociation (ETD) mass spectrometry.</title>
        <authorList>
            <person name="Chi A."/>
            <person name="Huttenhower C."/>
            <person name="Geer L.Y."/>
            <person name="Coon J.J."/>
            <person name="Syka J.E.P."/>
            <person name="Bai D.L."/>
            <person name="Shabanowitz J."/>
            <person name="Burke D.J."/>
            <person name="Troyanskaya O.G."/>
            <person name="Hunt D.F."/>
        </authorList>
    </citation>
    <scope>PHOSPHORYLATION [LARGE SCALE ANALYSIS] AT SER-537; SER-566 AND SER-589</scope>
    <scope>IDENTIFICATION BY MASS SPECTROMETRY [LARGE SCALE ANALYSIS]</scope>
</reference>
<reference key="16">
    <citation type="journal article" date="2008" name="Mol. Cell. Proteomics">
        <title>A multidimensional chromatography technology for in-depth phosphoproteome analysis.</title>
        <authorList>
            <person name="Albuquerque C.P."/>
            <person name="Smolka M.B."/>
            <person name="Payne S.H."/>
            <person name="Bafna V."/>
            <person name="Eng J."/>
            <person name="Zhou H."/>
        </authorList>
    </citation>
    <scope>PHOSPHORYLATION [LARGE SCALE ANALYSIS] AT SER-150; SER-396; SER-583 AND SER-670</scope>
    <scope>IDENTIFICATION BY MASS SPECTROMETRY [LARGE SCALE ANALYSIS]</scope>
</reference>
<reference key="17">
    <citation type="journal article" date="2009" name="Science">
        <title>Global analysis of Cdk1 substrate phosphorylation sites provides insights into evolution.</title>
        <authorList>
            <person name="Holt L.J."/>
            <person name="Tuch B.B."/>
            <person name="Villen J."/>
            <person name="Johnson A.D."/>
            <person name="Gygi S.P."/>
            <person name="Morgan D.O."/>
        </authorList>
    </citation>
    <scope>PHOSPHORYLATION [LARGE SCALE ANALYSIS] AT SER-150; SER-396; SER-469; SER-537; SER-539; SER-646; SER-664 AND SER-670</scope>
    <scope>IDENTIFICATION BY MASS SPECTROMETRY [LARGE SCALE ANALYSIS]</scope>
</reference>
<reference key="18">
    <citation type="journal article" date="2022" name="Biochemistry">
        <title>Arabidopsis PFA-DSP-Type Phosphohydrolases Target Specific Inositol Pyrophosphate Messengers.</title>
        <authorList>
            <person name="Gaugler P."/>
            <person name="Schneider R."/>
            <person name="Liu G."/>
            <person name="Qiu D."/>
            <person name="Weber J."/>
            <person name="Schmid J."/>
            <person name="Jork N."/>
            <person name="Haener M."/>
            <person name="Ritter K."/>
            <person name="Fernandez-Rebollo N."/>
            <person name="Giehl R.F.H."/>
            <person name="Trung M.N."/>
            <person name="Yadav R."/>
            <person name="Fiedler D."/>
            <person name="Gaugler V."/>
            <person name="Jessen H.J."/>
            <person name="Schaaf G."/>
            <person name="Laha D."/>
        </authorList>
    </citation>
    <scope>DISRUPTION PHENOTYPE</scope>
</reference>
<protein>
    <recommendedName>
        <fullName>Inositol hexakisphosphate kinase 1</fullName>
        <shortName>InsP6 kinase 1</shortName>
        <ecNumber>2.7.4.21</ecNumber>
    </recommendedName>
    <alternativeName>
        <fullName>InsP6 kinase KCS1</fullName>
    </alternativeName>
    <alternativeName>
        <fullName>PKC1 suppressor protein 1</fullName>
    </alternativeName>
</protein>
<name>KCS1_YEAST</name>
<comment type="function">
    <text evidence="3 4 5 8 9 10 12">Converts inositol hexakisphosphate (InsP6) to diphosphoinositol pentakisphosphate (InsP7/PP-InsP5). Involved in phosphate regulation and polyphosphate accumulation. Required for resistance to salt stress, cell wall integrity, vacuole morphogenesis, and telomere maintenance.</text>
</comment>
<comment type="catalytic activity">
    <reaction>
        <text>1D-myo-inositol hexakisphosphate + ATP = 5-diphospho-1D-myo-inositol 1,2,3,4,6-pentakisphosphate + ADP</text>
        <dbReference type="Rhea" id="RHEA:12793"/>
        <dbReference type="ChEBI" id="CHEBI:30616"/>
        <dbReference type="ChEBI" id="CHEBI:58130"/>
        <dbReference type="ChEBI" id="CHEBI:58628"/>
        <dbReference type="ChEBI" id="CHEBI:456216"/>
        <dbReference type="EC" id="2.7.4.21"/>
    </reaction>
</comment>
<comment type="catalytic activity">
    <reaction>
        <text>1-diphospho-1D-myo-inositol 2,3,4,5,6-pentakisphosphate + ATP + H(+) = 1,5-bis(diphospho)-1D-myo-inositol 2,3,4,6-tetrakisphosphate + ADP</text>
        <dbReference type="Rhea" id="RHEA:37467"/>
        <dbReference type="ChEBI" id="CHEBI:15378"/>
        <dbReference type="ChEBI" id="CHEBI:30616"/>
        <dbReference type="ChEBI" id="CHEBI:74946"/>
        <dbReference type="ChEBI" id="CHEBI:77983"/>
        <dbReference type="ChEBI" id="CHEBI:456216"/>
        <dbReference type="EC" id="2.7.4.21"/>
    </reaction>
</comment>
<comment type="biophysicochemical properties">
    <kinetics>
        <KM evidence="4">3.3 uM for InsP6</KM>
        <KM evidence="4">1.2 uM for InsP5</KM>
        <Vmax evidence="4">2.0 umol/min/mg enzyme</Vmax>
    </kinetics>
</comment>
<comment type="subcellular location">
    <subcellularLocation>
        <location evidence="6">Cytoplasm</location>
    </subcellularLocation>
</comment>
<comment type="disruption phenotype">
    <text evidence="11">Resistance to wortmannin.</text>
</comment>
<comment type="miscellaneous">
    <text evidence="7">Present with 1940 molecules/cell in log phase SD medium.</text>
</comment>
<comment type="similarity">
    <text evidence="13">Belongs to the inositol phosphokinase (IPK) family.</text>
</comment>